<sequence>MSNKAWGGRFEVQPEEWVDDFNASITFDQTLIDQDIEGSIAHATMLANQGIISQQDSEQIIQGLKSIQHDYHQDQIQFSASLEDIHLNIEHELIKRIGDAGGKLHTGRSRNDQVATDMHLYTKKQVQDIIALIKSLQSVIVDIASNNVDTIMPGYTHLQRAQPISFAHHIMTYFWMLQRDQQRFEDSLKRIDINPLGAAALSGTTYPIDRHETTALLNFGSLYENSLDAVSDRDYIIETLHNISLTMVHLSRFAEEIIFWSTDEAKFITLSDAFSTGSSIMPQKKNPDMAELIRGKVGRTTGHLMSMLMTLKGLPLAYNKDMQEDKEGLFDAVHTIKGSLRIFEGMIQTMTINKERLNQTVKEDFSNATELADYLVTKNIPFRTAHEIVGKIVLECIQQGHYLLDVPLATYQQHHSSIDADIYDYLQPENCLKRRQSYGSTGQSSVKQQLDVAKQLLSQ</sequence>
<organism>
    <name type="scientific">Staphylococcus aureus (strain Mu50 / ATCC 700699)</name>
    <dbReference type="NCBI Taxonomy" id="158878"/>
    <lineage>
        <taxon>Bacteria</taxon>
        <taxon>Bacillati</taxon>
        <taxon>Bacillota</taxon>
        <taxon>Bacilli</taxon>
        <taxon>Bacillales</taxon>
        <taxon>Staphylococcaceae</taxon>
        <taxon>Staphylococcus</taxon>
    </lineage>
</organism>
<comment type="catalytic activity">
    <reaction evidence="1">
        <text>2-(N(omega)-L-arginino)succinate = fumarate + L-arginine</text>
        <dbReference type="Rhea" id="RHEA:24020"/>
        <dbReference type="ChEBI" id="CHEBI:29806"/>
        <dbReference type="ChEBI" id="CHEBI:32682"/>
        <dbReference type="ChEBI" id="CHEBI:57472"/>
        <dbReference type="EC" id="4.3.2.1"/>
    </reaction>
</comment>
<comment type="pathway">
    <text evidence="1">Amino-acid biosynthesis; L-arginine biosynthesis; L-arginine from L-ornithine and carbamoyl phosphate: step 3/3.</text>
</comment>
<comment type="subcellular location">
    <subcellularLocation>
        <location evidence="1">Cytoplasm</location>
    </subcellularLocation>
</comment>
<comment type="similarity">
    <text evidence="1">Belongs to the lyase 1 family. Argininosuccinate lyase subfamily.</text>
</comment>
<gene>
    <name evidence="1" type="primary">argH</name>
    <name type="ordered locus">SAV0960</name>
</gene>
<accession>P63582</accession>
<accession>Q99VC8</accession>
<reference key="1">
    <citation type="journal article" date="2001" name="Lancet">
        <title>Whole genome sequencing of meticillin-resistant Staphylococcus aureus.</title>
        <authorList>
            <person name="Kuroda M."/>
            <person name="Ohta T."/>
            <person name="Uchiyama I."/>
            <person name="Baba T."/>
            <person name="Yuzawa H."/>
            <person name="Kobayashi I."/>
            <person name="Cui L."/>
            <person name="Oguchi A."/>
            <person name="Aoki K."/>
            <person name="Nagai Y."/>
            <person name="Lian J.-Q."/>
            <person name="Ito T."/>
            <person name="Kanamori M."/>
            <person name="Matsumaru H."/>
            <person name="Maruyama A."/>
            <person name="Murakami H."/>
            <person name="Hosoyama A."/>
            <person name="Mizutani-Ui Y."/>
            <person name="Takahashi N.K."/>
            <person name="Sawano T."/>
            <person name="Inoue R."/>
            <person name="Kaito C."/>
            <person name="Sekimizu K."/>
            <person name="Hirakawa H."/>
            <person name="Kuhara S."/>
            <person name="Goto S."/>
            <person name="Yabuzaki J."/>
            <person name="Kanehisa M."/>
            <person name="Yamashita A."/>
            <person name="Oshima K."/>
            <person name="Furuya K."/>
            <person name="Yoshino C."/>
            <person name="Shiba T."/>
            <person name="Hattori M."/>
            <person name="Ogasawara N."/>
            <person name="Hayashi H."/>
            <person name="Hiramatsu K."/>
        </authorList>
    </citation>
    <scope>NUCLEOTIDE SEQUENCE [LARGE SCALE GENOMIC DNA]</scope>
    <source>
        <strain>Mu50 / ATCC 700699</strain>
    </source>
</reference>
<proteinExistence type="inferred from homology"/>
<evidence type="ECO:0000255" key="1">
    <source>
        <dbReference type="HAMAP-Rule" id="MF_00006"/>
    </source>
</evidence>
<protein>
    <recommendedName>
        <fullName evidence="1">Argininosuccinate lyase</fullName>
        <shortName evidence="1">ASAL</shortName>
        <ecNumber evidence="1">4.3.2.1</ecNumber>
    </recommendedName>
    <alternativeName>
        <fullName evidence="1">Arginosuccinase</fullName>
    </alternativeName>
</protein>
<keyword id="KW-0028">Amino-acid biosynthesis</keyword>
<keyword id="KW-0055">Arginine biosynthesis</keyword>
<keyword id="KW-0963">Cytoplasm</keyword>
<keyword id="KW-0456">Lyase</keyword>
<feature type="chain" id="PRO_0000137822" description="Argininosuccinate lyase">
    <location>
        <begin position="1"/>
        <end position="459"/>
    </location>
</feature>
<dbReference type="EC" id="4.3.2.1" evidence="1"/>
<dbReference type="EMBL" id="BA000017">
    <property type="protein sequence ID" value="BAB57122.1"/>
    <property type="molecule type" value="Genomic_DNA"/>
</dbReference>
<dbReference type="RefSeq" id="WP_000066053.1">
    <property type="nucleotide sequence ID" value="NC_002758.2"/>
</dbReference>
<dbReference type="SMR" id="P63582"/>
<dbReference type="KEGG" id="sav:SAV0960"/>
<dbReference type="HOGENOM" id="CLU_027272_2_3_9"/>
<dbReference type="PhylomeDB" id="P63582"/>
<dbReference type="UniPathway" id="UPA00068">
    <property type="reaction ID" value="UER00114"/>
</dbReference>
<dbReference type="Proteomes" id="UP000002481">
    <property type="component" value="Chromosome"/>
</dbReference>
<dbReference type="GO" id="GO:0005829">
    <property type="term" value="C:cytosol"/>
    <property type="evidence" value="ECO:0007669"/>
    <property type="project" value="TreeGrafter"/>
</dbReference>
<dbReference type="GO" id="GO:0004056">
    <property type="term" value="F:argininosuccinate lyase activity"/>
    <property type="evidence" value="ECO:0007669"/>
    <property type="project" value="UniProtKB-UniRule"/>
</dbReference>
<dbReference type="GO" id="GO:0042450">
    <property type="term" value="P:arginine biosynthetic process via ornithine"/>
    <property type="evidence" value="ECO:0007669"/>
    <property type="project" value="InterPro"/>
</dbReference>
<dbReference type="GO" id="GO:0006526">
    <property type="term" value="P:L-arginine biosynthetic process"/>
    <property type="evidence" value="ECO:0007669"/>
    <property type="project" value="UniProtKB-UniRule"/>
</dbReference>
<dbReference type="CDD" id="cd01359">
    <property type="entry name" value="Argininosuccinate_lyase"/>
    <property type="match status" value="1"/>
</dbReference>
<dbReference type="FunFam" id="1.10.275.10:FF:000002">
    <property type="entry name" value="Argininosuccinate lyase"/>
    <property type="match status" value="1"/>
</dbReference>
<dbReference type="FunFam" id="1.10.40.30:FF:000001">
    <property type="entry name" value="Argininosuccinate lyase"/>
    <property type="match status" value="1"/>
</dbReference>
<dbReference type="FunFam" id="1.20.200.10:FF:000006">
    <property type="entry name" value="Argininosuccinate lyase"/>
    <property type="match status" value="1"/>
</dbReference>
<dbReference type="Gene3D" id="1.10.40.30">
    <property type="entry name" value="Fumarase/aspartase (C-terminal domain)"/>
    <property type="match status" value="1"/>
</dbReference>
<dbReference type="Gene3D" id="1.20.200.10">
    <property type="entry name" value="Fumarase/aspartase (Central domain)"/>
    <property type="match status" value="1"/>
</dbReference>
<dbReference type="Gene3D" id="1.10.275.10">
    <property type="entry name" value="Fumarase/aspartase (N-terminal domain)"/>
    <property type="match status" value="1"/>
</dbReference>
<dbReference type="HAMAP" id="MF_00006">
    <property type="entry name" value="Arg_succ_lyase"/>
    <property type="match status" value="1"/>
</dbReference>
<dbReference type="InterPro" id="IPR029419">
    <property type="entry name" value="Arg_succ_lyase_C"/>
</dbReference>
<dbReference type="InterPro" id="IPR009049">
    <property type="entry name" value="Argininosuccinate_lyase"/>
</dbReference>
<dbReference type="InterPro" id="IPR024083">
    <property type="entry name" value="Fumarase/histidase_N"/>
</dbReference>
<dbReference type="InterPro" id="IPR020557">
    <property type="entry name" value="Fumarate_lyase_CS"/>
</dbReference>
<dbReference type="InterPro" id="IPR000362">
    <property type="entry name" value="Fumarate_lyase_fam"/>
</dbReference>
<dbReference type="InterPro" id="IPR022761">
    <property type="entry name" value="Fumarate_lyase_N"/>
</dbReference>
<dbReference type="InterPro" id="IPR008948">
    <property type="entry name" value="L-Aspartase-like"/>
</dbReference>
<dbReference type="NCBIfam" id="TIGR00838">
    <property type="entry name" value="argH"/>
    <property type="match status" value="1"/>
</dbReference>
<dbReference type="PANTHER" id="PTHR43814">
    <property type="entry name" value="ARGININOSUCCINATE LYASE"/>
    <property type="match status" value="1"/>
</dbReference>
<dbReference type="PANTHER" id="PTHR43814:SF1">
    <property type="entry name" value="ARGININOSUCCINATE LYASE"/>
    <property type="match status" value="1"/>
</dbReference>
<dbReference type="Pfam" id="PF14698">
    <property type="entry name" value="ASL_C2"/>
    <property type="match status" value="1"/>
</dbReference>
<dbReference type="Pfam" id="PF00206">
    <property type="entry name" value="Lyase_1"/>
    <property type="match status" value="1"/>
</dbReference>
<dbReference type="PRINTS" id="PR00145">
    <property type="entry name" value="ARGSUCLYASE"/>
</dbReference>
<dbReference type="PRINTS" id="PR00149">
    <property type="entry name" value="FUMRATELYASE"/>
</dbReference>
<dbReference type="SUPFAM" id="SSF48557">
    <property type="entry name" value="L-aspartase-like"/>
    <property type="match status" value="1"/>
</dbReference>
<dbReference type="PROSITE" id="PS00163">
    <property type="entry name" value="FUMARATE_LYASES"/>
    <property type="match status" value="1"/>
</dbReference>
<name>ARLY_STAAM</name>